<organism>
    <name type="scientific">Vibrio atlanticus (strain LGP32)</name>
    <name type="common">Vibrio splendidus (strain Mel32)</name>
    <dbReference type="NCBI Taxonomy" id="575788"/>
    <lineage>
        <taxon>Bacteria</taxon>
        <taxon>Pseudomonadati</taxon>
        <taxon>Pseudomonadota</taxon>
        <taxon>Gammaproteobacteria</taxon>
        <taxon>Vibrionales</taxon>
        <taxon>Vibrionaceae</taxon>
        <taxon>Vibrio</taxon>
    </lineage>
</organism>
<name>YGFZ_VIBA3</name>
<comment type="function">
    <text evidence="1">Folate-binding protein involved in regulating the level of ATP-DnaA and in the modification of some tRNAs. It is probably a key factor in regulatory networks that act via tRNA modification, such as initiation of chromosomal replication.</text>
</comment>
<comment type="subcellular location">
    <subcellularLocation>
        <location evidence="1">Cytoplasm</location>
    </subcellularLocation>
</comment>
<comment type="similarity">
    <text evidence="1">Belongs to the tRNA-modifying YgfZ family.</text>
</comment>
<evidence type="ECO:0000255" key="1">
    <source>
        <dbReference type="HAMAP-Rule" id="MF_01175"/>
    </source>
</evidence>
<dbReference type="EMBL" id="FM954972">
    <property type="protein sequence ID" value="CAV19849.1"/>
    <property type="molecule type" value="Genomic_DNA"/>
</dbReference>
<dbReference type="SMR" id="B7VK90"/>
<dbReference type="STRING" id="575788.VS_2630"/>
<dbReference type="KEGG" id="vsp:VS_2630"/>
<dbReference type="PATRIC" id="fig|575788.5.peg.3876"/>
<dbReference type="eggNOG" id="COG0354">
    <property type="taxonomic scope" value="Bacteria"/>
</dbReference>
<dbReference type="HOGENOM" id="CLU_007884_6_1_6"/>
<dbReference type="Proteomes" id="UP000009100">
    <property type="component" value="Chromosome 1"/>
</dbReference>
<dbReference type="GO" id="GO:0005737">
    <property type="term" value="C:cytoplasm"/>
    <property type="evidence" value="ECO:0007669"/>
    <property type="project" value="UniProtKB-SubCell"/>
</dbReference>
<dbReference type="GO" id="GO:0005542">
    <property type="term" value="F:folic acid binding"/>
    <property type="evidence" value="ECO:0007669"/>
    <property type="project" value="UniProtKB-UniRule"/>
</dbReference>
<dbReference type="GO" id="GO:0016226">
    <property type="term" value="P:iron-sulfur cluster assembly"/>
    <property type="evidence" value="ECO:0007669"/>
    <property type="project" value="TreeGrafter"/>
</dbReference>
<dbReference type="GO" id="GO:0009451">
    <property type="term" value="P:RNA modification"/>
    <property type="evidence" value="ECO:0007669"/>
    <property type="project" value="InterPro"/>
</dbReference>
<dbReference type="GO" id="GO:0008033">
    <property type="term" value="P:tRNA processing"/>
    <property type="evidence" value="ECO:0007669"/>
    <property type="project" value="UniProtKB-UniRule"/>
</dbReference>
<dbReference type="FunFam" id="3.30.70.1400:FF:000002">
    <property type="entry name" value="tRNA-modifying protein YgfZ"/>
    <property type="match status" value="1"/>
</dbReference>
<dbReference type="Gene3D" id="2.40.30.160">
    <property type="match status" value="1"/>
</dbReference>
<dbReference type="Gene3D" id="3.30.70.1630">
    <property type="match status" value="1"/>
</dbReference>
<dbReference type="Gene3D" id="3.30.70.1400">
    <property type="entry name" value="Aminomethyltransferase beta-barrel domains"/>
    <property type="match status" value="1"/>
</dbReference>
<dbReference type="HAMAP" id="MF_01175">
    <property type="entry name" value="tRNA_modifying_YgfZ"/>
    <property type="match status" value="1"/>
</dbReference>
<dbReference type="InterPro" id="IPR029043">
    <property type="entry name" value="GcvT/YgfZ_C"/>
</dbReference>
<dbReference type="InterPro" id="IPR023758">
    <property type="entry name" value="tRNA-modifying_YgfZ"/>
</dbReference>
<dbReference type="InterPro" id="IPR045179">
    <property type="entry name" value="YgfZ/GcvT"/>
</dbReference>
<dbReference type="InterPro" id="IPR017703">
    <property type="entry name" value="YgfZ/GcvT_CS"/>
</dbReference>
<dbReference type="InterPro" id="IPR048451">
    <property type="entry name" value="YgfZ_barrel"/>
</dbReference>
<dbReference type="NCBIfam" id="NF007110">
    <property type="entry name" value="PRK09559.1"/>
    <property type="match status" value="1"/>
</dbReference>
<dbReference type="NCBIfam" id="TIGR03317">
    <property type="entry name" value="ygfZ_signature"/>
    <property type="match status" value="1"/>
</dbReference>
<dbReference type="PANTHER" id="PTHR22602">
    <property type="entry name" value="TRANSFERASE CAF17, MITOCHONDRIAL-RELATED"/>
    <property type="match status" value="1"/>
</dbReference>
<dbReference type="PANTHER" id="PTHR22602:SF0">
    <property type="entry name" value="TRANSFERASE CAF17, MITOCHONDRIAL-RELATED"/>
    <property type="match status" value="1"/>
</dbReference>
<dbReference type="Pfam" id="PF21130">
    <property type="entry name" value="YgfZ_barrel"/>
    <property type="match status" value="1"/>
</dbReference>
<dbReference type="SUPFAM" id="SSF101790">
    <property type="entry name" value="Aminomethyltransferase beta-barrel domain"/>
    <property type="match status" value="1"/>
</dbReference>
<dbReference type="SUPFAM" id="SSF103025">
    <property type="entry name" value="Folate-binding domain"/>
    <property type="match status" value="1"/>
</dbReference>
<protein>
    <recommendedName>
        <fullName evidence="1">tRNA-modifying protein YgfZ</fullName>
    </recommendedName>
</protein>
<gene>
    <name type="ordered locus">VS_2630</name>
</gene>
<reference key="1">
    <citation type="submission" date="2009-02" db="EMBL/GenBank/DDBJ databases">
        <title>Vibrio splendidus str. LGP32 complete genome.</title>
        <authorList>
            <person name="Mazel D."/>
            <person name="Le Roux F."/>
        </authorList>
    </citation>
    <scope>NUCLEOTIDE SEQUENCE [LARGE SCALE GENOMIC DNA]</scope>
    <source>
        <strain>LGP32</strain>
    </source>
</reference>
<accession>B7VK90</accession>
<proteinExistence type="inferred from homology"/>
<feature type="chain" id="PRO_1000164414" description="tRNA-modifying protein YgfZ">
    <location>
        <begin position="1"/>
        <end position="323"/>
    </location>
</feature>
<feature type="binding site" evidence="1">
    <location>
        <position position="29"/>
    </location>
    <ligand>
        <name>folate</name>
        <dbReference type="ChEBI" id="CHEBI:62501"/>
    </ligand>
</feature>
<feature type="binding site" evidence="1">
    <location>
        <position position="182"/>
    </location>
    <ligand>
        <name>folate</name>
        <dbReference type="ChEBI" id="CHEBI:62501"/>
    </ligand>
</feature>
<sequence>MDWKNTFQPLAHTQNESLPELMMTHVSDWSAITMIGDDKKSYLQGQVTCDVVTLPNDESTLGAHCDAKGKVWSIFRLFHHNGGYALMQPKSAIEVELVEIKKYAVFSKVDIEQTSDVVIGVMGASADQYIDSISESQGKVRVISGGTAVQVSDNRWALLVTQEATEALVSSSTAEKVSEALWQYHEILDAQPNLSKAEQNEHIPQALNLQAIGGISFSKGCYTGQETVARAKYRGMNKREMRIVSGTSSDVLSLENTIELERSVGENWRGAGRLLNVYQFADNQAIGLMVLPNNLDDDVQLRLTAQPEQIWNILPLPYSLDEE</sequence>
<keyword id="KW-0963">Cytoplasm</keyword>
<keyword id="KW-0290">Folate-binding</keyword>
<keyword id="KW-0819">tRNA processing</keyword>